<organism>
    <name type="scientific">Phocoena phocoena</name>
    <name type="common">Harbor porpoise</name>
    <dbReference type="NCBI Taxonomy" id="9742"/>
    <lineage>
        <taxon>Eukaryota</taxon>
        <taxon>Metazoa</taxon>
        <taxon>Chordata</taxon>
        <taxon>Craniata</taxon>
        <taxon>Vertebrata</taxon>
        <taxon>Euteleostomi</taxon>
        <taxon>Mammalia</taxon>
        <taxon>Eutheria</taxon>
        <taxon>Laurasiatheria</taxon>
        <taxon>Artiodactyla</taxon>
        <taxon>Whippomorpha</taxon>
        <taxon>Cetacea</taxon>
        <taxon>Odontoceti</taxon>
        <taxon>Phocoenidae</taxon>
        <taxon>Phocoena</taxon>
    </lineage>
</organism>
<accession>P02477</accession>
<reference key="1">
    <citation type="book" date="1980" name="Protides of the biological fluids, Proc. 28th colloquium">
        <title>Trends in the molecular evolution of alpha-crystallin.</title>
        <editorList>
            <person name="Peeters H."/>
        </editorList>
        <authorList>
            <person name="de Jong W.W."/>
            <person name="Zweers A."/>
            <person name="Goodman M."/>
        </authorList>
    </citation>
    <scope>PARTIAL PROTEIN SEQUENCE</scope>
</reference>
<name>CRYAA_PHOPH</name>
<protein>
    <recommendedName>
        <fullName>Alpha-crystallin A chain</fullName>
    </recommendedName>
</protein>
<evidence type="ECO:0000250" key="1"/>
<evidence type="ECO:0000250" key="2">
    <source>
        <dbReference type="UniProtKB" id="P02470"/>
    </source>
</evidence>
<evidence type="ECO:0000250" key="3">
    <source>
        <dbReference type="UniProtKB" id="P02474"/>
    </source>
</evidence>
<evidence type="ECO:0000250" key="4">
    <source>
        <dbReference type="UniProtKB" id="P02489"/>
    </source>
</evidence>
<evidence type="ECO:0000255" key="5">
    <source>
        <dbReference type="PROSITE-ProRule" id="PRU00285"/>
    </source>
</evidence>
<evidence type="ECO:0000256" key="6">
    <source>
        <dbReference type="SAM" id="MobiDB-lite"/>
    </source>
</evidence>
<evidence type="ECO:0000305" key="7"/>
<comment type="function">
    <text evidence="4">Contributes to the transparency and refractive index of the lens. Acts as a chaperone, preventing aggregation of various proteins under a wide range of stress conditions. Required for the correct formation of lens intermediate filaments as part of a complex composed of BFSP1, BFSP2 and CRYAA.</text>
</comment>
<comment type="subunit">
    <text evidence="2 4">Heteromer composed of three CRYAA and one CRYAB subunits. Inter-subunit bridging via zinc ions enhances stability, which is crucial as there is no protein turn over in the lens. Can also form homodimers and homotetramers (dimers of dimers) which serve as the building blocks of homooligomers (By similarity). Within homooligomers, the zinc-binding motif is created from residues of 3 different molecules. His-100 and Glu-102 from one molecule are ligands of the zinc ion, and His-107 and His-154 residues from additional molecules complete the site with tetrahedral coordination geometry (By similarity). Part of a complex required for lens intermediate filament formation composed of BFSP1, BFSP2 and CRYAA (By similarity).</text>
</comment>
<comment type="subcellular location">
    <subcellularLocation>
        <location evidence="4">Cytoplasm</location>
    </subcellularLocation>
    <subcellularLocation>
        <location evidence="4">Nucleus</location>
    </subcellularLocation>
    <text evidence="4">Translocates to the nucleus during heat shock and resides in sub-nuclear structures known as SC35 speckles or nuclear splicing speckles.</text>
</comment>
<comment type="PTM">
    <text evidence="4">Acetylation at Lys-70 may increase chaperone activity.</text>
</comment>
<comment type="PTM">
    <text evidence="4">Undergoes age-dependent proteolytical cleavage at the C-terminus.</text>
</comment>
<comment type="similarity">
    <text evidence="5">Belongs to the small heat shock protein (HSP20) family.</text>
</comment>
<dbReference type="PIR" id="A02879">
    <property type="entry name" value="CYPEAA"/>
</dbReference>
<dbReference type="RefSeq" id="XP_065732237.1">
    <property type="nucleotide sequence ID" value="XM_065876165.1"/>
</dbReference>
<dbReference type="SMR" id="P02477"/>
<dbReference type="GlyCosmos" id="P02477">
    <property type="glycosylation" value="1 site, No reported glycans"/>
</dbReference>
<dbReference type="GeneID" id="136122247"/>
<dbReference type="GO" id="GO:0005737">
    <property type="term" value="C:cytoplasm"/>
    <property type="evidence" value="ECO:0000250"/>
    <property type="project" value="UniProtKB"/>
</dbReference>
<dbReference type="GO" id="GO:0005634">
    <property type="term" value="C:nucleus"/>
    <property type="evidence" value="ECO:0000250"/>
    <property type="project" value="UniProtKB"/>
</dbReference>
<dbReference type="GO" id="GO:0046872">
    <property type="term" value="F:metal ion binding"/>
    <property type="evidence" value="ECO:0007669"/>
    <property type="project" value="UniProtKB-KW"/>
</dbReference>
<dbReference type="GO" id="GO:0005212">
    <property type="term" value="F:structural constituent of eye lens"/>
    <property type="evidence" value="ECO:0007669"/>
    <property type="project" value="UniProtKB-KW"/>
</dbReference>
<dbReference type="GO" id="GO:0051082">
    <property type="term" value="F:unfolded protein binding"/>
    <property type="evidence" value="ECO:0007669"/>
    <property type="project" value="TreeGrafter"/>
</dbReference>
<dbReference type="GO" id="GO:0002088">
    <property type="term" value="P:lens development in camera-type eye"/>
    <property type="evidence" value="ECO:0007669"/>
    <property type="project" value="TreeGrafter"/>
</dbReference>
<dbReference type="GO" id="GO:0043066">
    <property type="term" value="P:negative regulation of apoptotic process"/>
    <property type="evidence" value="ECO:0007669"/>
    <property type="project" value="TreeGrafter"/>
</dbReference>
<dbReference type="GO" id="GO:0042026">
    <property type="term" value="P:protein refolding"/>
    <property type="evidence" value="ECO:0007669"/>
    <property type="project" value="TreeGrafter"/>
</dbReference>
<dbReference type="GO" id="GO:0009408">
    <property type="term" value="P:response to heat"/>
    <property type="evidence" value="ECO:0007669"/>
    <property type="project" value="TreeGrafter"/>
</dbReference>
<dbReference type="FunFam" id="2.60.40.790:FF:000008">
    <property type="entry name" value="Alpha-crystallin A chain"/>
    <property type="match status" value="1"/>
</dbReference>
<dbReference type="Gene3D" id="2.60.40.790">
    <property type="match status" value="1"/>
</dbReference>
<dbReference type="InterPro" id="IPR002068">
    <property type="entry name" value="A-crystallin/Hsp20_dom"/>
</dbReference>
<dbReference type="InterPro" id="IPR055269">
    <property type="entry name" value="Alpha-crystallin/HSP_16"/>
</dbReference>
<dbReference type="InterPro" id="IPR001436">
    <property type="entry name" value="Alpha-crystallin/sHSP_animal"/>
</dbReference>
<dbReference type="InterPro" id="IPR003090">
    <property type="entry name" value="Alpha-crystallin_N"/>
</dbReference>
<dbReference type="InterPro" id="IPR008978">
    <property type="entry name" value="HSP20-like_chaperone"/>
</dbReference>
<dbReference type="PANTHER" id="PTHR45640:SF14">
    <property type="entry name" value="ALPHA-CRYSTALLIN A CHAIN"/>
    <property type="match status" value="1"/>
</dbReference>
<dbReference type="PANTHER" id="PTHR45640">
    <property type="entry name" value="HEAT SHOCK PROTEIN HSP-12.2-RELATED"/>
    <property type="match status" value="1"/>
</dbReference>
<dbReference type="Pfam" id="PF00525">
    <property type="entry name" value="Crystallin"/>
    <property type="match status" value="1"/>
</dbReference>
<dbReference type="Pfam" id="PF00011">
    <property type="entry name" value="HSP20"/>
    <property type="match status" value="1"/>
</dbReference>
<dbReference type="PIRSF" id="PIRSF036514">
    <property type="entry name" value="Sm_HSP_B1"/>
    <property type="match status" value="1"/>
</dbReference>
<dbReference type="PRINTS" id="PR00299">
    <property type="entry name" value="ACRYSTALLIN"/>
</dbReference>
<dbReference type="SUPFAM" id="SSF49764">
    <property type="entry name" value="HSP20-like chaperones"/>
    <property type="match status" value="1"/>
</dbReference>
<dbReference type="PROSITE" id="PS01031">
    <property type="entry name" value="SHSP"/>
    <property type="match status" value="1"/>
</dbReference>
<feature type="chain" id="PRO_0000125878" description="Alpha-crystallin A chain">
    <location>
        <begin position="1"/>
        <end position="173"/>
    </location>
</feature>
<feature type="domain" description="sHSP" evidence="5">
    <location>
        <begin position="52"/>
        <end position="162"/>
    </location>
</feature>
<feature type="region of interest" description="Required for complex formation with BFSP1 and BFSP2" evidence="4">
    <location>
        <begin position="1"/>
        <end position="63"/>
    </location>
</feature>
<feature type="region of interest" description="Disordered" evidence="6">
    <location>
        <begin position="144"/>
        <end position="173"/>
    </location>
</feature>
<feature type="compositionally biased region" description="Basic and acidic residues" evidence="6">
    <location>
        <begin position="153"/>
        <end position="167"/>
    </location>
</feature>
<feature type="binding site" evidence="2">
    <location>
        <position position="100"/>
    </location>
    <ligand>
        <name>Zn(2+)</name>
        <dbReference type="ChEBI" id="CHEBI:29105"/>
        <label>1</label>
    </ligand>
</feature>
<feature type="binding site" evidence="2">
    <location>
        <position position="102"/>
    </location>
    <ligand>
        <name>Zn(2+)</name>
        <dbReference type="ChEBI" id="CHEBI:29105"/>
        <label>1</label>
    </ligand>
</feature>
<feature type="binding site" evidence="2">
    <location>
        <position position="107"/>
    </location>
    <ligand>
        <name>Zn(2+)</name>
        <dbReference type="ChEBI" id="CHEBI:29105"/>
        <label>2</label>
    </ligand>
</feature>
<feature type="binding site" evidence="2">
    <location>
        <position position="154"/>
    </location>
    <ligand>
        <name>Zn(2+)</name>
        <dbReference type="ChEBI" id="CHEBI:29105"/>
        <label>3</label>
    </ligand>
</feature>
<feature type="modified residue" description="N-acetylmethionine" evidence="3 7">
    <location>
        <position position="1"/>
    </location>
</feature>
<feature type="modified residue" description="Deamidated glutamine; partial" evidence="1">
    <location>
        <position position="6"/>
    </location>
</feature>
<feature type="modified residue" description="Phosphoserine" evidence="4">
    <location>
        <position position="45"/>
    </location>
</feature>
<feature type="modified residue" description="Deamidated glutamine; partial" evidence="1">
    <location>
        <position position="50"/>
    </location>
</feature>
<feature type="modified residue" description="N6-acetyllysine" evidence="4">
    <location>
        <position position="70"/>
    </location>
</feature>
<feature type="modified residue" description="Deamidated glutamine; partial" evidence="1">
    <location>
        <position position="90"/>
    </location>
</feature>
<feature type="modified residue" description="N6-acetyllysine" evidence="4">
    <location>
        <position position="99"/>
    </location>
</feature>
<feature type="modified residue" description="Deamidated asparagine; partial" evidence="1">
    <location>
        <position position="101"/>
    </location>
</feature>
<feature type="modified residue" description="Phosphoserine" evidence="2">
    <location>
        <position position="122"/>
    </location>
</feature>
<feature type="modified residue" description="Deamidated asparagine; partial" evidence="1">
    <location>
        <position position="123"/>
    </location>
</feature>
<feature type="glycosylation site" description="O-linked (GlcNAc) serine" evidence="1">
    <location>
        <position position="162"/>
    </location>
</feature>
<gene>
    <name type="primary">CRYAA</name>
</gene>
<proteinExistence type="evidence at protein level"/>
<keyword id="KW-0007">Acetylation</keyword>
<keyword id="KW-0143">Chaperone</keyword>
<keyword id="KW-0963">Cytoplasm</keyword>
<keyword id="KW-0903">Direct protein sequencing</keyword>
<keyword id="KW-0273">Eye lens protein</keyword>
<keyword id="KW-0325">Glycoprotein</keyword>
<keyword id="KW-0479">Metal-binding</keyword>
<keyword id="KW-0488">Methylation</keyword>
<keyword id="KW-0539">Nucleus</keyword>
<keyword id="KW-0597">Phosphoprotein</keyword>
<keyword id="KW-0862">Zinc</keyword>
<sequence>MDIAIQHPWFKRALGPFYPSRLFDQFFGEGLFEYDLLPFLSSTISPYYRQSLFRSVLDSGISEVRSDRDKFVIFLDVKHFSPEDLTVKVQEDFVEIHGKHNERQDDHGYISREFHRRYRLPSNVDQSALSCSLSADGMLTFSGPKVTSGMDAGHSERAIPVSREEKPSSAPSS</sequence>